<proteinExistence type="evidence at protein level"/>
<accession>Q9Y2J4</accession>
<accession>A8K6F1</accession>
<accession>B7Z5Q1</accession>
<accession>E9PHW3</accession>
<accession>Q53EP1</accession>
<accession>Q96F99</accession>
<accession>Q9UKB4</accession>
<feature type="chain" id="PRO_0000190672" description="Angiomotin-like protein 2">
    <location>
        <begin position="1"/>
        <end position="779"/>
    </location>
</feature>
<feature type="region of interest" description="Disordered" evidence="5">
    <location>
        <begin position="41"/>
        <end position="215"/>
    </location>
</feature>
<feature type="region of interest" description="Required for interaction with CDH5" evidence="3">
    <location>
        <begin position="101"/>
        <end position="307"/>
    </location>
</feature>
<feature type="region of interest" description="Required for interaction with CDH1" evidence="16">
    <location>
        <begin position="220"/>
        <end position="307"/>
    </location>
</feature>
<feature type="region of interest" description="Disordered" evidence="5">
    <location>
        <begin position="263"/>
        <end position="308"/>
    </location>
</feature>
<feature type="region of interest" description="Disordered" evidence="5">
    <location>
        <begin position="522"/>
        <end position="543"/>
    </location>
</feature>
<feature type="region of interest" description="Disordered" evidence="5">
    <location>
        <begin position="679"/>
        <end position="753"/>
    </location>
</feature>
<feature type="coiled-coil region" evidence="4">
    <location>
        <begin position="308"/>
        <end position="581"/>
    </location>
</feature>
<feature type="short sequence motif" description="PDZ-binding" evidence="23">
    <location>
        <begin position="776"/>
        <end position="779"/>
    </location>
</feature>
<feature type="compositionally biased region" description="Basic and acidic residues" evidence="5">
    <location>
        <begin position="100"/>
        <end position="112"/>
    </location>
</feature>
<feature type="compositionally biased region" description="Basic and acidic residues" evidence="5">
    <location>
        <begin position="141"/>
        <end position="152"/>
    </location>
</feature>
<feature type="compositionally biased region" description="Low complexity" evidence="5">
    <location>
        <begin position="160"/>
        <end position="169"/>
    </location>
</feature>
<feature type="compositionally biased region" description="Polar residues" evidence="5">
    <location>
        <begin position="177"/>
        <end position="193"/>
    </location>
</feature>
<feature type="compositionally biased region" description="Pro residues" evidence="5">
    <location>
        <begin position="196"/>
        <end position="213"/>
    </location>
</feature>
<feature type="compositionally biased region" description="Low complexity" evidence="5">
    <location>
        <begin position="298"/>
        <end position="308"/>
    </location>
</feature>
<feature type="compositionally biased region" description="Gly residues" evidence="5">
    <location>
        <begin position="530"/>
        <end position="539"/>
    </location>
</feature>
<feature type="compositionally biased region" description="Polar residues" evidence="5">
    <location>
        <begin position="680"/>
        <end position="690"/>
    </location>
</feature>
<feature type="compositionally biased region" description="Polar residues" evidence="5">
    <location>
        <begin position="725"/>
        <end position="740"/>
    </location>
</feature>
<feature type="site" description="Required for interaction with MAGI1 and ACTB" evidence="16">
    <location>
        <position position="107"/>
    </location>
</feature>
<feature type="site" description="Required for interaction with YAP1 and ubiquitination at K-347 and K-408" evidence="15">
    <location>
        <position position="213"/>
    </location>
</feature>
<feature type="modified residue" description="Phosphotyrosine; by FGFR1" evidence="2">
    <location>
        <position position="107"/>
    </location>
</feature>
<feature type="modified residue" description="Phosphoserine" evidence="25">
    <location>
        <position position="759"/>
    </location>
</feature>
<feature type="modified residue" description="Phosphoserine" evidence="3">
    <location>
        <position position="762"/>
    </location>
</feature>
<feature type="cross-link" description="Glycyl lysine isopeptide (Lys-Gly) (interchain with G-Cter in ubiquitin)" evidence="15 17">
    <location>
        <position position="347"/>
    </location>
</feature>
<feature type="cross-link" description="Glycyl lysine isopeptide (Lys-Gly) (interchain with G-Cter in ubiquitin)" evidence="15 17">
    <location>
        <position position="408"/>
    </location>
</feature>
<feature type="splice variant" id="VSP_044081" description="In isoform 4." evidence="20">
    <original>M</original>
    <variation>MTGRKASGGTPCTLRKGAPIITLGKNWTERLAAGDSVGCSGARCHRPLSRQLCASQRSM</variation>
    <location>
        <position position="1"/>
    </location>
</feature>
<feature type="splice variant" id="VSP_037826" description="In isoform 3." evidence="21">
    <location>
        <begin position="525"/>
        <end position="526"/>
    </location>
</feature>
<feature type="splice variant" id="VSP_015711" description="In isoform 2." evidence="19 20">
    <original>T</original>
    <variation>TA</variation>
    <location>
        <position position="701"/>
    </location>
</feature>
<feature type="sequence variant" id="VAR_055497" description="In dbSNP:rs35377537.">
    <original>T</original>
    <variation>I</variation>
    <location>
        <position position="227"/>
    </location>
</feature>
<feature type="sequence variant" id="VAR_055498" description="In dbSNP:rs2303635.">
    <original>A</original>
    <variation>P</variation>
    <location>
        <position position="342"/>
    </location>
</feature>
<feature type="sequence variant" id="VAR_055499" description="In dbSNP:rs2241559.">
    <original>G</original>
    <variation>S</variation>
    <location>
        <position position="415"/>
    </location>
</feature>
<feature type="sequence variant" id="VAR_023535" description="In dbSNP:rs1353776." evidence="6 7 8 18">
    <original>E</original>
    <variation>D</variation>
    <location>
        <position position="731"/>
    </location>
</feature>
<feature type="mutagenesis site" description="Abolishes interaction with MAGI1 and ACTB. No effect on interaction with CDH1." evidence="16">
    <original>Y</original>
    <variation>A</variation>
    <location>
        <position position="107"/>
    </location>
</feature>
<feature type="mutagenesis site" description="Abolishes interaction with YAP1 and ubiquitination at K-347 and K-408. Abolishes interaction with WWTR1, but does not affect the interaction between WWTR1 and TTF1 on gene promoter regions. No effect on interaction with CDH1." evidence="14 15 16">
    <original>Y</original>
    <variation>A</variation>
    <location>
        <position position="213"/>
    </location>
</feature>
<feature type="mutagenesis site" description="Abolishes monoubiquitination by WWP1 and reduces interaction with LATS2 and YAP1." evidence="15 17">
    <original>K</original>
    <variation>R</variation>
    <location>
        <position position="347"/>
    </location>
</feature>
<feature type="mutagenesis site" description="Abolishes monoubiquitination by WWP1 and reduces interaction with LATS2 and YAP1." evidence="15 17">
    <original>K</original>
    <variation>R</variation>
    <location>
        <position position="408"/>
    </location>
</feature>
<feature type="mutagenesis site" description="No effect on interaction with WWTR1." evidence="14">
    <location>
        <begin position="776"/>
        <end position="779"/>
    </location>
</feature>
<feature type="sequence conflict" description="In Ref. 2; BAH12987." evidence="22" ref="2">
    <original>K</original>
    <variation>E</variation>
    <location>
        <position position="666"/>
    </location>
</feature>
<feature type="sequence conflict" description="In Ref. 4; AAD56361." evidence="22" ref="4">
    <original>Q</original>
    <variation>K</variation>
    <location>
        <position position="680"/>
    </location>
</feature>
<organism>
    <name type="scientific">Homo sapiens</name>
    <name type="common">Human</name>
    <dbReference type="NCBI Taxonomy" id="9606"/>
    <lineage>
        <taxon>Eukaryota</taxon>
        <taxon>Metazoa</taxon>
        <taxon>Chordata</taxon>
        <taxon>Craniata</taxon>
        <taxon>Vertebrata</taxon>
        <taxon>Euteleostomi</taxon>
        <taxon>Mammalia</taxon>
        <taxon>Eutheria</taxon>
        <taxon>Euarchontoglires</taxon>
        <taxon>Primates</taxon>
        <taxon>Haplorrhini</taxon>
        <taxon>Catarrhini</taxon>
        <taxon>Hominidae</taxon>
        <taxon>Homo</taxon>
    </lineage>
</organism>
<keyword id="KW-0025">Alternative splicing</keyword>
<keyword id="KW-0965">Cell junction</keyword>
<keyword id="KW-0966">Cell projection</keyword>
<keyword id="KW-0175">Coiled coil</keyword>
<keyword id="KW-0963">Cytoplasm</keyword>
<keyword id="KW-0967">Endosome</keyword>
<keyword id="KW-1017">Isopeptide bond</keyword>
<keyword id="KW-0597">Phosphoprotein</keyword>
<keyword id="KW-1267">Proteomics identification</keyword>
<keyword id="KW-1185">Reference proteome</keyword>
<keyword id="KW-0832">Ubl conjugation</keyword>
<keyword id="KW-0879">Wnt signaling pathway</keyword>
<name>AMOL2_HUMAN</name>
<protein>
    <recommendedName>
        <fullName evidence="22">Angiomotin-like protein 2</fullName>
    </recommendedName>
    <alternativeName>
        <fullName evidence="24">Leman coiled-coil protein</fullName>
        <shortName evidence="24">LCCP</shortName>
    </alternativeName>
</protein>
<sequence>MRTLEDSSGTVLHRLIQEQLRYGNLTETRTLLAIQQQALRGGAGTGGTGSPQASLEILAPEDSQVLQQATRQEPQGQEHQGGENHLAENTLYRLCPQPSKGEELPTYEEAKAHSQYYAAQQAGTRPHAGDRDPRGAPGGSRRQDEALRELRHGHVRSLSERLLQLSLERNGARAPSHMSSSHSFPQLARNQQGPPLRGPPAEGPESRGPPPQYPHVVLAHETTTAVTDPRYRARGSPHFQHAEVRILQAQVPPVFLQQQQQYQYLQQSQEHPPPPHPAALGHGPLSSLSPPAVEGPVSAQASSATSGSAHLAQMEAVLRENARLQRDNERLQRELESSAEKAGRIEKLESEIQRLSEAHESLTRASSKREALEKTMRNKMDSEMRRLQDFNRDLRERLESANRRLASKTQEAQAGSQDMVAKLLAQSYEQQQEQEKLEREMALLRGAIEDQRRRAELLEQALGNAQGRAARAEEELRKKQAYVEKVERLQQALGQLQAACEKREQLELRLRTRLEQELKALRAQQRQAGAPGGSSGSGGSPELSALRLSEQLREKEEQILALEADMTKWEQKYLEERAMRQFAMDAAATAAAQRDTTLIRHSPQPSPSSSFNEGLLTGGHRHQEMESRLKVLHAQILEKDAVIKVLQQRSRRDPGKAIQGSLRPAKSVPSVFAAAAAGTQGWQGLSSSERQTADAPARLTTDRAPTEEPVVTAPPAAHAKHGSRDGSTQTEGPPDSTSTCLPPEPDSLLGCSSSQRAASLDSVATSRVQDLSDMVEILI</sequence>
<reference key="1">
    <citation type="journal article" date="1999" name="DNA Res.">
        <title>Prediction of the coding sequences of unidentified human genes. XIII. The complete sequences of 100 new cDNA clones from brain which code for large proteins in vitro.</title>
        <authorList>
            <person name="Nagase T."/>
            <person name="Ishikawa K."/>
            <person name="Suyama M."/>
            <person name="Kikuno R."/>
            <person name="Hirosawa M."/>
            <person name="Miyajima N."/>
            <person name="Tanaka A."/>
            <person name="Kotani H."/>
            <person name="Nomura N."/>
            <person name="Ohara O."/>
        </authorList>
    </citation>
    <scope>NUCLEOTIDE SEQUENCE [LARGE SCALE MRNA] (ISOFORM 2)</scope>
    <scope>VARIANT ASP-731</scope>
    <source>
        <tissue>Brain</tissue>
    </source>
</reference>
<reference key="2">
    <citation type="journal article" date="2004" name="Nat. Genet.">
        <title>Complete sequencing and characterization of 21,243 full-length human cDNAs.</title>
        <authorList>
            <person name="Ota T."/>
            <person name="Suzuki Y."/>
            <person name="Nishikawa T."/>
            <person name="Otsuki T."/>
            <person name="Sugiyama T."/>
            <person name="Irie R."/>
            <person name="Wakamatsu A."/>
            <person name="Hayashi K."/>
            <person name="Sato H."/>
            <person name="Nagai K."/>
            <person name="Kimura K."/>
            <person name="Makita H."/>
            <person name="Sekine M."/>
            <person name="Obayashi M."/>
            <person name="Nishi T."/>
            <person name="Shibahara T."/>
            <person name="Tanaka T."/>
            <person name="Ishii S."/>
            <person name="Yamamoto J."/>
            <person name="Saito K."/>
            <person name="Kawai Y."/>
            <person name="Isono Y."/>
            <person name="Nakamura Y."/>
            <person name="Nagahari K."/>
            <person name="Murakami K."/>
            <person name="Yasuda T."/>
            <person name="Iwayanagi T."/>
            <person name="Wagatsuma M."/>
            <person name="Shiratori A."/>
            <person name="Sudo H."/>
            <person name="Hosoiri T."/>
            <person name="Kaku Y."/>
            <person name="Kodaira H."/>
            <person name="Kondo H."/>
            <person name="Sugawara M."/>
            <person name="Takahashi M."/>
            <person name="Kanda K."/>
            <person name="Yokoi T."/>
            <person name="Furuya T."/>
            <person name="Kikkawa E."/>
            <person name="Omura Y."/>
            <person name="Abe K."/>
            <person name="Kamihara K."/>
            <person name="Katsuta N."/>
            <person name="Sato K."/>
            <person name="Tanikawa M."/>
            <person name="Yamazaki M."/>
            <person name="Ninomiya K."/>
            <person name="Ishibashi T."/>
            <person name="Yamashita H."/>
            <person name="Murakawa K."/>
            <person name="Fujimori K."/>
            <person name="Tanai H."/>
            <person name="Kimata M."/>
            <person name="Watanabe M."/>
            <person name="Hiraoka S."/>
            <person name="Chiba Y."/>
            <person name="Ishida S."/>
            <person name="Ono Y."/>
            <person name="Takiguchi S."/>
            <person name="Watanabe S."/>
            <person name="Yosida M."/>
            <person name="Hotuta T."/>
            <person name="Kusano J."/>
            <person name="Kanehori K."/>
            <person name="Takahashi-Fujii A."/>
            <person name="Hara H."/>
            <person name="Tanase T.-O."/>
            <person name="Nomura Y."/>
            <person name="Togiya S."/>
            <person name="Komai F."/>
            <person name="Hara R."/>
            <person name="Takeuchi K."/>
            <person name="Arita M."/>
            <person name="Imose N."/>
            <person name="Musashino K."/>
            <person name="Yuuki H."/>
            <person name="Oshima A."/>
            <person name="Sasaki N."/>
            <person name="Aotsuka S."/>
            <person name="Yoshikawa Y."/>
            <person name="Matsunawa H."/>
            <person name="Ichihara T."/>
            <person name="Shiohata N."/>
            <person name="Sano S."/>
            <person name="Moriya S."/>
            <person name="Momiyama H."/>
            <person name="Satoh N."/>
            <person name="Takami S."/>
            <person name="Terashima Y."/>
            <person name="Suzuki O."/>
            <person name="Nakagawa S."/>
            <person name="Senoh A."/>
            <person name="Mizoguchi H."/>
            <person name="Goto Y."/>
            <person name="Shimizu F."/>
            <person name="Wakebe H."/>
            <person name="Hishigaki H."/>
            <person name="Watanabe T."/>
            <person name="Sugiyama A."/>
            <person name="Takemoto M."/>
            <person name="Kawakami B."/>
            <person name="Yamazaki M."/>
            <person name="Watanabe K."/>
            <person name="Kumagai A."/>
            <person name="Itakura S."/>
            <person name="Fukuzumi Y."/>
            <person name="Fujimori Y."/>
            <person name="Komiyama M."/>
            <person name="Tashiro H."/>
            <person name="Tanigami A."/>
            <person name="Fujiwara T."/>
            <person name="Ono T."/>
            <person name="Yamada K."/>
            <person name="Fujii Y."/>
            <person name="Ozaki K."/>
            <person name="Hirao M."/>
            <person name="Ohmori Y."/>
            <person name="Kawabata A."/>
            <person name="Hikiji T."/>
            <person name="Kobatake N."/>
            <person name="Inagaki H."/>
            <person name="Ikema Y."/>
            <person name="Okamoto S."/>
            <person name="Okitani R."/>
            <person name="Kawakami T."/>
            <person name="Noguchi S."/>
            <person name="Itoh T."/>
            <person name="Shigeta K."/>
            <person name="Senba T."/>
            <person name="Matsumura K."/>
            <person name="Nakajima Y."/>
            <person name="Mizuno T."/>
            <person name="Morinaga M."/>
            <person name="Sasaki M."/>
            <person name="Togashi T."/>
            <person name="Oyama M."/>
            <person name="Hata H."/>
            <person name="Watanabe M."/>
            <person name="Komatsu T."/>
            <person name="Mizushima-Sugano J."/>
            <person name="Satoh T."/>
            <person name="Shirai Y."/>
            <person name="Takahashi Y."/>
            <person name="Nakagawa K."/>
            <person name="Okumura K."/>
            <person name="Nagase T."/>
            <person name="Nomura N."/>
            <person name="Kikuchi H."/>
            <person name="Masuho Y."/>
            <person name="Yamashita R."/>
            <person name="Nakai K."/>
            <person name="Yada T."/>
            <person name="Nakamura Y."/>
            <person name="Ohara O."/>
            <person name="Isogai T."/>
            <person name="Sugano S."/>
        </authorList>
    </citation>
    <scope>NUCLEOTIDE SEQUENCE [LARGE SCALE MRNA] (ISOFORMS 2 AND 4)</scope>
    <scope>VARIANT ASP-731</scope>
    <source>
        <tissue>Placenta</tissue>
        <tissue>Teratocarcinoma</tissue>
    </source>
</reference>
<reference key="3">
    <citation type="submission" date="2005-04" db="EMBL/GenBank/DDBJ databases">
        <authorList>
            <person name="Totoki Y."/>
            <person name="Toyoda A."/>
            <person name="Takeda T."/>
            <person name="Sakaki Y."/>
            <person name="Tanaka A."/>
            <person name="Yokoyama S."/>
        </authorList>
    </citation>
    <scope>NUCLEOTIDE SEQUENCE [LARGE SCALE MRNA] (ISOFORM 3)</scope>
    <scope>VARIANT ASP-731</scope>
    <source>
        <tissue>Kidney</tissue>
    </source>
</reference>
<reference key="4">
    <citation type="journal article" date="2002" name="Gene">
        <title>Angiomotin belongs to a novel protein family with conserved coiled-coil and PDZ binding domains.</title>
        <authorList>
            <person name="Bratt A."/>
            <person name="Wilson W.J."/>
            <person name="Troyanovsky B."/>
            <person name="Aase K."/>
            <person name="Kessler R."/>
            <person name="Van Meir E.G."/>
            <person name="Holmgren L."/>
        </authorList>
    </citation>
    <scope>NUCLEOTIDE SEQUENCE [MRNA] OF 211-779 (ISOFORM 1)</scope>
    <scope>VARIANT ASP-731</scope>
    <source>
        <tissue>Glioblastoma</tissue>
    </source>
</reference>
<reference key="5">
    <citation type="journal article" date="2003" name="Gene">
        <authorList>
            <person name="Bratt A."/>
            <person name="Wilson W.J."/>
            <person name="Troyanovsky B."/>
            <person name="Aase K."/>
            <person name="Kessler R."/>
            <person name="Van Meir E.G."/>
            <person name="Holmgren L."/>
        </authorList>
    </citation>
    <scope>ERRATUM OF PUBMED:12406577</scope>
</reference>
<reference key="6">
    <citation type="journal article" date="2006" name="Nature">
        <title>The DNA sequence, annotation and analysis of human chromosome 3.</title>
        <authorList>
            <person name="Muzny D.M."/>
            <person name="Scherer S.E."/>
            <person name="Kaul R."/>
            <person name="Wang J."/>
            <person name="Yu J."/>
            <person name="Sudbrak R."/>
            <person name="Buhay C.J."/>
            <person name="Chen R."/>
            <person name="Cree A."/>
            <person name="Ding Y."/>
            <person name="Dugan-Rocha S."/>
            <person name="Gill R."/>
            <person name="Gunaratne P."/>
            <person name="Harris R.A."/>
            <person name="Hawes A.C."/>
            <person name="Hernandez J."/>
            <person name="Hodgson A.V."/>
            <person name="Hume J."/>
            <person name="Jackson A."/>
            <person name="Khan Z.M."/>
            <person name="Kovar-Smith C."/>
            <person name="Lewis L.R."/>
            <person name="Lozado R.J."/>
            <person name="Metzker M.L."/>
            <person name="Milosavljevic A."/>
            <person name="Miner G.R."/>
            <person name="Morgan M.B."/>
            <person name="Nazareth L.V."/>
            <person name="Scott G."/>
            <person name="Sodergren E."/>
            <person name="Song X.-Z."/>
            <person name="Steffen D."/>
            <person name="Wei S."/>
            <person name="Wheeler D.A."/>
            <person name="Wright M.W."/>
            <person name="Worley K.C."/>
            <person name="Yuan Y."/>
            <person name="Zhang Z."/>
            <person name="Adams C.Q."/>
            <person name="Ansari-Lari M.A."/>
            <person name="Ayele M."/>
            <person name="Brown M.J."/>
            <person name="Chen G."/>
            <person name="Chen Z."/>
            <person name="Clendenning J."/>
            <person name="Clerc-Blankenburg K.P."/>
            <person name="Chen R."/>
            <person name="Chen Z."/>
            <person name="Davis C."/>
            <person name="Delgado O."/>
            <person name="Dinh H.H."/>
            <person name="Dong W."/>
            <person name="Draper H."/>
            <person name="Ernst S."/>
            <person name="Fu G."/>
            <person name="Gonzalez-Garay M.L."/>
            <person name="Garcia D.K."/>
            <person name="Gillett W."/>
            <person name="Gu J."/>
            <person name="Hao B."/>
            <person name="Haugen E."/>
            <person name="Havlak P."/>
            <person name="He X."/>
            <person name="Hennig S."/>
            <person name="Hu S."/>
            <person name="Huang W."/>
            <person name="Jackson L.R."/>
            <person name="Jacob L.S."/>
            <person name="Kelly S.H."/>
            <person name="Kube M."/>
            <person name="Levy R."/>
            <person name="Li Z."/>
            <person name="Liu B."/>
            <person name="Liu J."/>
            <person name="Liu W."/>
            <person name="Lu J."/>
            <person name="Maheshwari M."/>
            <person name="Nguyen B.-V."/>
            <person name="Okwuonu G.O."/>
            <person name="Palmeiri A."/>
            <person name="Pasternak S."/>
            <person name="Perez L.M."/>
            <person name="Phelps K.A."/>
            <person name="Plopper F.J."/>
            <person name="Qiang B."/>
            <person name="Raymond C."/>
            <person name="Rodriguez R."/>
            <person name="Saenphimmachak C."/>
            <person name="Santibanez J."/>
            <person name="Shen H."/>
            <person name="Shen Y."/>
            <person name="Subramanian S."/>
            <person name="Tabor P.E."/>
            <person name="Verduzco D."/>
            <person name="Waldron L."/>
            <person name="Wang J."/>
            <person name="Wang J."/>
            <person name="Wang Q."/>
            <person name="Williams G.A."/>
            <person name="Wong G.K.-S."/>
            <person name="Yao Z."/>
            <person name="Zhang J."/>
            <person name="Zhang X."/>
            <person name="Zhao G."/>
            <person name="Zhou J."/>
            <person name="Zhou Y."/>
            <person name="Nelson D."/>
            <person name="Lehrach H."/>
            <person name="Reinhardt R."/>
            <person name="Naylor S.L."/>
            <person name="Yang H."/>
            <person name="Olson M."/>
            <person name="Weinstock G."/>
            <person name="Gibbs R.A."/>
        </authorList>
    </citation>
    <scope>NUCLEOTIDE SEQUENCE [LARGE SCALE GENOMIC DNA]</scope>
</reference>
<reference key="7">
    <citation type="journal article" date="2004" name="Genome Res.">
        <title>The status, quality, and expansion of the NIH full-length cDNA project: the Mammalian Gene Collection (MGC).</title>
        <authorList>
            <consortium name="The MGC Project Team"/>
        </authorList>
    </citation>
    <scope>NUCLEOTIDE SEQUENCE [LARGE SCALE MRNA] OF 244-779 (ISOFORM 1)</scope>
    <source>
        <tissue>Brain</tissue>
    </source>
</reference>
<reference key="8">
    <citation type="journal article" date="2007" name="Development">
        <title>Amotl2 is essential for cell movements in zebrafish embryo and regulates c-Src translocation.</title>
        <authorList>
            <person name="Huang H."/>
            <person name="Lu F.I."/>
            <person name="Jia S."/>
            <person name="Meng S."/>
            <person name="Cao Y."/>
            <person name="Wang Y."/>
            <person name="Ma W."/>
            <person name="Yin K."/>
            <person name="Wen Z."/>
            <person name="Peng J."/>
            <person name="Thisse C."/>
            <person name="Thisse B."/>
            <person name="Meng A."/>
        </authorList>
    </citation>
    <scope>FUNCTION</scope>
    <scope>INTERACTION WITH SRC</scope>
</reference>
<reference key="9">
    <citation type="journal article" date="2010" name="Sci. Signal.">
        <title>Quantitative phosphoproteomics reveals widespread full phosphorylation site occupancy during mitosis.</title>
        <authorList>
            <person name="Olsen J.V."/>
            <person name="Vermeulen M."/>
            <person name="Santamaria A."/>
            <person name="Kumar C."/>
            <person name="Miller M.L."/>
            <person name="Jensen L.J."/>
            <person name="Gnad F."/>
            <person name="Cox J."/>
            <person name="Jensen T.S."/>
            <person name="Nigg E.A."/>
            <person name="Brunak S."/>
            <person name="Mann M."/>
        </authorList>
    </citation>
    <scope>IDENTIFICATION BY MASS SPECTROMETRY [LARGE SCALE ANALYSIS]</scope>
    <source>
        <tissue>Cervix carcinoma</tissue>
    </source>
</reference>
<reference key="10">
    <citation type="journal article" date="2011" name="Genes Dev.">
        <title>Angiomotin is a novel Hippo pathway component that inhibits YAP oncoprotein.</title>
        <authorList>
            <person name="Zhao B."/>
            <person name="Li L."/>
            <person name="Lu Q."/>
            <person name="Wang L.H."/>
            <person name="Liu C.Y."/>
            <person name="Lei Q."/>
            <person name="Guan K.L."/>
        </authorList>
    </citation>
    <scope>FUNCTION</scope>
    <scope>INTERACTION WITH YAP1</scope>
</reference>
<reference key="11">
    <citation type="journal article" date="2011" name="J. Biol. Chem.">
        <title>Angiomotin-like2 gene (amotl2) is required for migration and proliferation of endothelial cells during angiogenesis.</title>
        <authorList>
            <person name="Wang Y."/>
            <person name="Li Z."/>
            <person name="Xu P."/>
            <person name="Huang L."/>
            <person name="Tong J."/>
            <person name="Huang H."/>
            <person name="Meng A."/>
        </authorList>
    </citation>
    <scope>FUNCTION</scope>
</reference>
<reference key="12">
    <citation type="journal article" date="2012" name="J. Biol. Chem.">
        <title>The Amotl2 gene inhibits Wnt/beta-catenin signaling and regulates embryonic development in zebrafish.</title>
        <authorList>
            <person name="Li Z."/>
            <person name="Wang Y."/>
            <person name="Zhang M."/>
            <person name="Xu P."/>
            <person name="Huang H."/>
            <person name="Wu D."/>
            <person name="Meng A."/>
        </authorList>
    </citation>
    <scope>FUNCTION</scope>
</reference>
<reference key="13">
    <citation type="journal article" date="2013" name="Gene">
        <title>AMOTL2 interaction with TAZ causes the inhibition of surfactant proteins expression in lung cells.</title>
        <authorList>
            <person name="Lucci V."/>
            <person name="Di Palma T."/>
            <person name="D'Ambrosio C."/>
            <person name="Scaloni A."/>
            <person name="Zannini M."/>
        </authorList>
    </citation>
    <scope>FUNCTION</scope>
    <scope>INTERACTION WITH WWTR1</scope>
    <scope>SUBCELLULAR LOCATION</scope>
    <scope>MUTAGENESIS OF TYR-213 AND 776-ILE--ILE-779</scope>
</reference>
<reference key="14">
    <citation type="journal article" date="2013" name="J. Cell Sci.">
        <title>Amotl2 interacts with LL5beta, localizes to podosomes and regulates postsynaptic differentiation in muscle.</title>
        <authorList>
            <person name="Proszynski T.J."/>
            <person name="Sanes J.R."/>
        </authorList>
    </citation>
    <scope>FUNCTION</scope>
    <scope>INTERACTION WITH PHLDB2</scope>
</reference>
<reference key="15">
    <citation type="journal article" date="2014" name="J. Proteomics">
        <title>An enzyme assisted RP-RPLC approach for in-depth analysis of human liver phosphoproteome.</title>
        <authorList>
            <person name="Bian Y."/>
            <person name="Song C."/>
            <person name="Cheng K."/>
            <person name="Dong M."/>
            <person name="Wang F."/>
            <person name="Huang J."/>
            <person name="Sun D."/>
            <person name="Wang L."/>
            <person name="Ye M."/>
            <person name="Zou H."/>
        </authorList>
    </citation>
    <scope>PHOSPHORYLATION [LARGE SCALE ANALYSIS] AT SER-759</scope>
    <scope>IDENTIFICATION BY MASS SPECTROMETRY [LARGE SCALE ANALYSIS]</scope>
    <source>
        <tissue>Liver</tissue>
    </source>
</reference>
<reference key="16">
    <citation type="journal article" date="2016" name="EMBO Rep.">
        <title>Role of Angiomotin-like 2 mono-ubiquitination on YAP inhibition.</title>
        <authorList>
            <person name="Kim M."/>
            <person name="Kim M."/>
            <person name="Park S.J."/>
            <person name="Lee C."/>
            <person name="Lim D.S."/>
        </authorList>
    </citation>
    <scope>FUNCTION</scope>
    <scope>INTERACTION WITH LATS2 AND YAP1</scope>
    <scope>UBIQUITINATION AT LYS-347 AND LYS-408</scope>
    <scope>MUTAGENESIS OF TYR-213; LYS-347 AND LYS-408</scope>
</reference>
<reference key="17">
    <citation type="journal article" date="2017" name="Sci. Rep.">
        <title>The E-cadherin/AmotL2 complex organizes actin filaments required for epithelial hexagonal packing and blastocyst hatching.</title>
        <authorList>
            <person name="Hildebrand S."/>
            <person name="Hultin S."/>
            <person name="Subramani A."/>
            <person name="Petropoulos S."/>
            <person name="Zhang Y."/>
            <person name="Cao X."/>
            <person name="Mpindi J."/>
            <person name="Kalloniemi O."/>
            <person name="Johansson S."/>
            <person name="Majumdar A."/>
            <person name="Lanner F."/>
            <person name="Holmgren L."/>
        </authorList>
    </citation>
    <scope>FUNCTION</scope>
    <scope>INTERACTION WITH CDH1</scope>
    <scope>SUBCELLULAR LOCATION</scope>
    <scope>DEVELOPMENTAL STAGE</scope>
    <scope>MUTAGENESIS OF TYR-107 AND TYR-213</scope>
</reference>
<reference key="18">
    <citation type="journal article" date="2021" name="Life. Sci Alliance">
        <title>AMOTL2 mono-ubiquitination by WWP1 promotes contact inhibition by facilitating LATS activation.</title>
        <authorList>
            <person name="Hwang D."/>
            <person name="Kim M."/>
            <person name="Kim S."/>
            <person name="Kwon M.R."/>
            <person name="Kang Y.S."/>
            <person name="Kim D."/>
            <person name="Kang H.C."/>
            <person name="Lim D.S."/>
        </authorList>
    </citation>
    <scope>FUNCTION</scope>
    <scope>INTERACTION WITH WWP1</scope>
    <scope>UBIQUITINATION AT LYS-347 AND LYS-408</scope>
    <scope>MUTAGENESIS OF LYS-347 AND LYS-408</scope>
</reference>
<evidence type="ECO:0000250" key="1">
    <source>
        <dbReference type="UniProtKB" id="A0A8I3QA39"/>
    </source>
</evidence>
<evidence type="ECO:0000250" key="2">
    <source>
        <dbReference type="UniProtKB" id="A1YB07"/>
    </source>
</evidence>
<evidence type="ECO:0000250" key="3">
    <source>
        <dbReference type="UniProtKB" id="Q8K371"/>
    </source>
</evidence>
<evidence type="ECO:0000255" key="4"/>
<evidence type="ECO:0000256" key="5">
    <source>
        <dbReference type="SAM" id="MobiDB-lite"/>
    </source>
</evidence>
<evidence type="ECO:0000269" key="6">
    <source>
    </source>
</evidence>
<evidence type="ECO:0000269" key="7">
    <source>
    </source>
</evidence>
<evidence type="ECO:0000269" key="8">
    <source>
    </source>
</evidence>
<evidence type="ECO:0000269" key="9">
    <source>
    </source>
</evidence>
<evidence type="ECO:0000269" key="10">
    <source>
    </source>
</evidence>
<evidence type="ECO:0000269" key="11">
    <source>
    </source>
</evidence>
<evidence type="ECO:0000269" key="12">
    <source>
    </source>
</evidence>
<evidence type="ECO:0000269" key="13">
    <source>
    </source>
</evidence>
<evidence type="ECO:0000269" key="14">
    <source>
    </source>
</evidence>
<evidence type="ECO:0000269" key="15">
    <source>
    </source>
</evidence>
<evidence type="ECO:0000269" key="16">
    <source>
    </source>
</evidence>
<evidence type="ECO:0000269" key="17">
    <source>
    </source>
</evidence>
<evidence type="ECO:0000269" key="18">
    <source ref="3"/>
</evidence>
<evidence type="ECO:0000303" key="19">
    <source>
    </source>
</evidence>
<evidence type="ECO:0000303" key="20">
    <source>
    </source>
</evidence>
<evidence type="ECO:0000303" key="21">
    <source ref="3"/>
</evidence>
<evidence type="ECO:0000305" key="22"/>
<evidence type="ECO:0000305" key="23">
    <source>
    </source>
</evidence>
<evidence type="ECO:0000312" key="24">
    <source>
        <dbReference type="HGNC" id="HGNC:17812"/>
    </source>
</evidence>
<evidence type="ECO:0007744" key="25">
    <source>
    </source>
</evidence>
<gene>
    <name evidence="24" type="primary">AMOTL2</name>
    <name type="synonym">KIAA0989</name>
</gene>
<comment type="function">
    <text evidence="3 9 10 11 12 13 14 15 16 17">Regulates the translocation of phosphorylated SRC to peripheral cell-matrix adhesion sites. Required for proper architecture of actin filaments. Plays a role in coupling actin fibers to cell junctions in endothelial cells and is therefore required for correct endothelial cell morphology via facilitating transcellular transmission of mechanical force resulting in endothelial cell elongation (By similarity). Required for the anchoring of radial actin fibers to CDH1 junction complexes at the cell membrane which facilitates organization of radial actin fiber structure and cellular response to contractile forces (PubMed:28842668). This contributes to maintenance of cell area, size, shape, epithelial sheet organization and trophectoderm cell properties that facilitate blastocyst zona hatching (PubMed:28842668). Inhibits the Wnt/beta-catenin signaling pathway, probably by recruiting CTNNB1 to recycling endosomes and hence preventing its translocation to the nucleus. Participates in angiogenesis. Activates the Hippo signaling pathway in response to cell contact inhibition via interaction with and ubiquitination by Crumbs complex-bound WWP1 (PubMed:34404733). Ubiquitinated AMOTL2 then interacts with LATS2 which in turn phosphorylates YAP1, excluding it from the nucleus and localizing it to the cytoplasm and tight junctions, therefore ultimately repressing YAP1-driven transcription of target genes (PubMed:17293535, PubMed:21205866, PubMed:26598551). Acts to inhibit WWTR1/TAZ transcriptional coactivator activity via sequestering WWTR1/TAZ in the cytoplasm and at tight junctions (PubMed:23911299). Regulates the size and protein composition of the podosome cortex and core at myofibril neuromuscular junctions (PubMed:23525008). Selectively promotes FGF-induced MAPK activation through SRC (PubMed:17293535). May play a role in the polarity, proliferation and migration of endothelial cells.</text>
</comment>
<comment type="subunit">
    <text evidence="1 3 9 10 13 14 15 16 17">Part of a complex composed of AMOTL2, MAGI1 and CDH5, within the complex AMOTL2 acts as a scaffold protein for the interaction of MAGI1 with CDH5 (By similarity). The complex is required for coupling actin fibers to cell junctions in endothelial cells (By similarity). Within the complex AMOTL2 (via its N-terminus) interacts with CDH5 (By similarity). Interacts (via N-terminus) with MAGI1 (By similarity). Interacts (via N-terminus) with ACTB; the interaction facilitates binding of cell junction complexes to actin fibers in endothelial cells (By similarity). Interacts with CDH1; the interaction may facilitate binding of radial actin fibers to cell junction complexes (PubMed:28842668). Interacts with SRC (PubMed:17293535). Interacts with YAP1; the interaction is required for ubiquitination of AMOTL2 and localization of YAP1 to tight junctions (PubMed:21205866, PubMed:26598551). Interacts with WWP1; the interaction facilitates WWP1 interaction with the Crumbs complex and subsequent WWP1 translocation to the plasma membrane (PubMed:34404733). WWP1 interaction with the Crumbs complex promotes WWP1 monoubiquitination of AMOTL2 which subsequently activates the Hippo signaling pathway (PubMed:34404733). When ubiquitinated interacts with LATS2 (via UBA domain); the interaction promotes LATS2 phosphorylation of YAP1 (PubMed:26598551). Interacts (via PPXY motif) with WWTR1/TAZ (via WW domain); the interaction promotes WWTR1/TAZ localization to the cytoplasm and thereby inhibition of its transcriptional properties (PubMed:23911299). Interacts with PHLDB2; interaction may facilitate PHLDB2 localization to the myotube podosome cortex that surrounds the core (PubMed:23525008).</text>
</comment>
<comment type="interaction">
    <interactant intactId="EBI-746752">
        <id>Q9Y2J4</id>
    </interactant>
    <interactant intactId="EBI-17286414">
        <id>A2BDD9</id>
        <label>AMOT</label>
    </interactant>
    <organismsDiffer>false</organismsDiffer>
    <experiments>3</experiments>
</comment>
<comment type="interaction">
    <interactant intactId="EBI-746752">
        <id>Q9Y2J4</id>
    </interactant>
    <interactant intactId="EBI-10229433">
        <id>Q13515</id>
        <label>BFSP2</label>
    </interactant>
    <organismsDiffer>false</organismsDiffer>
    <experiments>3</experiments>
</comment>
<comment type="interaction">
    <interactant intactId="EBI-746752">
        <id>Q9Y2J4</id>
    </interactant>
    <interactant intactId="EBI-5666615">
        <id>Q5PSV4</id>
        <label>BRMS1L</label>
    </interactant>
    <organismsDiffer>false</organismsDiffer>
    <experiments>3</experiments>
</comment>
<comment type="interaction">
    <interactant intactId="EBI-746752">
        <id>Q9Y2J4</id>
    </interactant>
    <interactant intactId="EBI-358049">
        <id>Q13895</id>
        <label>BYSL</label>
    </interactant>
    <organismsDiffer>false</organismsDiffer>
    <experiments>3</experiments>
</comment>
<comment type="interaction">
    <interactant intactId="EBI-746752">
        <id>Q9Y2J4</id>
    </interactant>
    <interactant intactId="EBI-11530605">
        <id>Q9H257-2</id>
        <label>CARD9</label>
    </interactant>
    <organismsDiffer>false</organismsDiffer>
    <experiments>3</experiments>
</comment>
<comment type="interaction">
    <interactant intactId="EBI-746752">
        <id>Q9Y2J4</id>
    </interactant>
    <interactant intactId="EBI-740814">
        <id>Q8N715</id>
        <label>CCDC185</label>
    </interactant>
    <organismsDiffer>false</organismsDiffer>
    <experiments>3</experiments>
</comment>
<comment type="interaction">
    <interactant intactId="EBI-746752">
        <id>Q9Y2J4</id>
    </interactant>
    <interactant intactId="EBI-10181422">
        <id>A0A1B0GWI1</id>
        <label>CCDC196</label>
    </interactant>
    <organismsDiffer>false</organismsDiffer>
    <experiments>3</experiments>
</comment>
<comment type="interaction">
    <interactant intactId="EBI-746752">
        <id>Q9Y2J4</id>
    </interactant>
    <interactant intactId="EBI-10961624">
        <id>Q2TAC2-2</id>
        <label>CCDC57</label>
    </interactant>
    <organismsDiffer>false</organismsDiffer>
    <experiments>3</experiments>
</comment>
<comment type="interaction">
    <interactant intactId="EBI-746752">
        <id>Q9Y2J4</id>
    </interactant>
    <interactant intactId="EBI-10175300">
        <id>Q8TD31-3</id>
        <label>CCHCR1</label>
    </interactant>
    <organismsDiffer>false</organismsDiffer>
    <experiments>3</experiments>
</comment>
<comment type="interaction">
    <interactant intactId="EBI-746752">
        <id>Q9Y2J4</id>
    </interactant>
    <interactant intactId="EBI-295634">
        <id>Q16543</id>
        <label>CDC37</label>
    </interactant>
    <organismsDiffer>false</organismsDiffer>
    <experiments>3</experiments>
</comment>
<comment type="interaction">
    <interactant intactId="EBI-746752">
        <id>Q9Y2J4</id>
    </interactant>
    <interactant intactId="EBI-739784">
        <id>Q9BW66</id>
        <label>CINP</label>
    </interactant>
    <organismsDiffer>false</organismsDiffer>
    <experiments>3</experiments>
</comment>
<comment type="interaction">
    <interactant intactId="EBI-746752">
        <id>Q9Y2J4</id>
    </interactant>
    <interactant intactId="EBI-77321">
        <id>Q9UER7</id>
        <label>DAXX</label>
    </interactant>
    <organismsDiffer>false</organismsDiffer>
    <experiments>3</experiments>
</comment>
<comment type="interaction">
    <interactant intactId="EBI-746752">
        <id>Q9Y2J4</id>
    </interactant>
    <interactant intactId="EBI-11984733">
        <id>O60941-5</id>
        <label>DTNB</label>
    </interactant>
    <organismsDiffer>false</organismsDiffer>
    <experiments>3</experiments>
</comment>
<comment type="interaction">
    <interactant intactId="EBI-746752">
        <id>Q9Y2J4</id>
    </interactant>
    <interactant intactId="EBI-10264440">
        <id>Q8IYY4</id>
        <label>DZIP1L</label>
    </interactant>
    <organismsDiffer>false</organismsDiffer>
    <experiments>3</experiments>
</comment>
<comment type="interaction">
    <interactant intactId="EBI-746752">
        <id>Q9Y2J4</id>
    </interactant>
    <interactant intactId="EBI-6658203">
        <id>Q86YD7</id>
        <label>FAM90A1</label>
    </interactant>
    <organismsDiffer>false</organismsDiffer>
    <experiments>3</experiments>
</comment>
<comment type="interaction">
    <interactant intactId="EBI-746752">
        <id>Q9Y2J4</id>
    </interactant>
    <interactant intactId="EBI-12091825">
        <id>Q96RD9</id>
        <label>FCRL5</label>
    </interactant>
    <organismsDiffer>false</organismsDiffer>
    <experiments>3</experiments>
</comment>
<comment type="interaction">
    <interactant intactId="EBI-746752">
        <id>Q9Y2J4</id>
    </interactant>
    <interactant intactId="EBI-4312072">
        <id>P46439</id>
        <label>GSTM5</label>
    </interactant>
    <organismsDiffer>false</organismsDiffer>
    <experiments>4</experiments>
</comment>
<comment type="interaction">
    <interactant intactId="EBI-746752">
        <id>Q9Y2J4</id>
    </interactant>
    <interactant intactId="EBI-8472129">
        <id>Q9HAQ2</id>
        <label>KIF9</label>
    </interactant>
    <organismsDiffer>false</organismsDiffer>
    <experiments>3</experiments>
</comment>
<comment type="interaction">
    <interactant intactId="EBI-746752">
        <id>Q9Y2J4</id>
    </interactant>
    <interactant intactId="EBI-298429">
        <id>P04264</id>
        <label>KRT1</label>
    </interactant>
    <organismsDiffer>false</organismsDiffer>
    <experiments>3</experiments>
</comment>
<comment type="interaction">
    <interactant intactId="EBI-746752">
        <id>Q9Y2J4</id>
    </interactant>
    <interactant intactId="EBI-739909">
        <id>Q969R5</id>
        <label>L3MBTL2</label>
    </interactant>
    <organismsDiffer>false</organismsDiffer>
    <experiments>3</experiments>
</comment>
<comment type="interaction">
    <interactant intactId="EBI-746752">
        <id>Q9Y2J4</id>
    </interactant>
    <interactant intactId="EBI-2830427">
        <id>Q03252</id>
        <label>LMNB2</label>
    </interactant>
    <organismsDiffer>false</organismsDiffer>
    <experiments>3</experiments>
</comment>
<comment type="interaction">
    <interactant intactId="EBI-746752">
        <id>Q9Y2J4</id>
    </interactant>
    <interactant intactId="EBI-11742507">
        <id>Q8TAP4-4</id>
        <label>LMO3</label>
    </interactant>
    <organismsDiffer>false</organismsDiffer>
    <experiments>3</experiments>
</comment>
<comment type="interaction">
    <interactant intactId="EBI-746752">
        <id>Q9Y2J4</id>
    </interactant>
    <interactant intactId="EBI-746778">
        <id>Q96A72</id>
        <label>MAGOHB</label>
    </interactant>
    <organismsDiffer>false</organismsDiffer>
    <experiments>4</experiments>
</comment>
<comment type="interaction">
    <interactant intactId="EBI-746752">
        <id>Q9Y2J4</id>
    </interactant>
    <interactant intactId="EBI-1048159">
        <id>P55081</id>
        <label>MFAP1</label>
    </interactant>
    <organismsDiffer>false</organismsDiffer>
    <experiments>3</experiments>
</comment>
<comment type="interaction">
    <interactant intactId="EBI-746752">
        <id>Q9Y2J4</id>
    </interactant>
    <interactant intactId="EBI-399257">
        <id>Q15014</id>
        <label>MORF4L2</label>
    </interactant>
    <organismsDiffer>false</organismsDiffer>
    <experiments>3</experiments>
</comment>
<comment type="interaction">
    <interactant intactId="EBI-746752">
        <id>Q9Y2J4</id>
    </interactant>
    <interactant intactId="EBI-14083835">
        <id>O94964-4</id>
        <label>MTCL2</label>
    </interactant>
    <organismsDiffer>false</organismsDiffer>
    <experiments>3</experiments>
</comment>
<comment type="interaction">
    <interactant intactId="EBI-746752">
        <id>Q9Y2J4</id>
    </interactant>
    <interactant intactId="EBI-14093244">
        <id>Q9ULV0-2</id>
        <label>MYO5B</label>
    </interactant>
    <organismsDiffer>false</organismsDiffer>
    <experiments>3</experiments>
</comment>
<comment type="interaction">
    <interactant intactId="EBI-746752">
        <id>Q9Y2J4</id>
    </interactant>
    <interactant intactId="EBI-715849">
        <id>O14777</id>
        <label>NDC80</label>
    </interactant>
    <organismsDiffer>false</organismsDiffer>
    <experiments>3</experiments>
</comment>
<comment type="interaction">
    <interactant intactId="EBI-746752">
        <id>Q9Y2J4</id>
    </interactant>
    <interactant intactId="EBI-1014514">
        <id>P35240-4</id>
        <label>NF2</label>
    </interactant>
    <organismsDiffer>false</organismsDiffer>
    <experiments>3</experiments>
</comment>
<comment type="interaction">
    <interactant intactId="EBI-746752">
        <id>Q9Y2J4</id>
    </interactant>
    <interactant intactId="EBI-3951858">
        <id>Q16649</id>
        <label>NFIL3</label>
    </interactant>
    <organismsDiffer>false</organismsDiffer>
    <experiments>4</experiments>
</comment>
<comment type="interaction">
    <interactant intactId="EBI-746752">
        <id>Q9Y2J4</id>
    </interactant>
    <interactant intactId="EBI-744782">
        <id>Q9Y5B8</id>
        <label>NME7</label>
    </interactant>
    <organismsDiffer>false</organismsDiffer>
    <experiments>3</experiments>
</comment>
<comment type="interaction">
    <interactant intactId="EBI-746752">
        <id>Q9Y2J4</id>
    </interactant>
    <interactant intactId="EBI-14066006">
        <id>Q4G0R1</id>
        <label>PIBF1</label>
    </interactant>
    <organismsDiffer>false</organismsDiffer>
    <experiments>3</experiments>
</comment>
<comment type="interaction">
    <interactant intactId="EBI-746752">
        <id>Q9Y2J4</id>
    </interactant>
    <interactant intactId="EBI-1383852">
        <id>P54646</id>
        <label>PRKAA2</label>
    </interactant>
    <organismsDiffer>false</organismsDiffer>
    <experiments>3</experiments>
</comment>
<comment type="interaction">
    <interactant intactId="EBI-746752">
        <id>Q9Y2J4</id>
    </interactant>
    <interactant intactId="EBI-2798416">
        <id>Q99633</id>
        <label>PRPF18</label>
    </interactant>
    <organismsDiffer>false</organismsDiffer>
    <experiments>3</experiments>
</comment>
<comment type="interaction">
    <interactant intactId="EBI-746752">
        <id>Q9Y2J4</id>
    </interactant>
    <interactant intactId="EBI-359720">
        <id>P17980</id>
        <label>PSMC3</label>
    </interactant>
    <organismsDiffer>false</organismsDiffer>
    <experiments>5</experiments>
</comment>
<comment type="interaction">
    <interactant intactId="EBI-746752">
        <id>Q9Y2J4</id>
    </interactant>
    <interactant intactId="EBI-1055693">
        <id>O75771</id>
        <label>RAD51D</label>
    </interactant>
    <organismsDiffer>false</organismsDiffer>
    <experiments>8</experiments>
</comment>
<comment type="interaction">
    <interactant intactId="EBI-746752">
        <id>Q9Y2J4</id>
    </interactant>
    <interactant intactId="EBI-749285">
        <id>Q15311</id>
        <label>RALBP1</label>
    </interactant>
    <organismsDiffer>false</organismsDiffer>
    <experiments>3</experiments>
</comment>
<comment type="interaction">
    <interactant intactId="EBI-746752">
        <id>Q9Y2J4</id>
    </interactant>
    <interactant intactId="EBI-3437896">
        <id>Q86YV0</id>
        <label>RASAL3</label>
    </interactant>
    <organismsDiffer>false</organismsDiffer>
    <experiments>3</experiments>
</comment>
<comment type="interaction">
    <interactant intactId="EBI-746752">
        <id>Q9Y2J4</id>
    </interactant>
    <interactant intactId="EBI-2372238">
        <id>Q5VTR2</id>
        <label>RNF20</label>
    </interactant>
    <organismsDiffer>false</organismsDiffer>
    <experiments>4</experiments>
</comment>
<comment type="interaction">
    <interactant intactId="EBI-746752">
        <id>Q9Y2J4</id>
    </interactant>
    <interactant intactId="EBI-744408">
        <id>O75150</id>
        <label>RNF40</label>
    </interactant>
    <organismsDiffer>false</organismsDiffer>
    <experiments>3</experiments>
</comment>
<comment type="interaction">
    <interactant intactId="EBI-746752">
        <id>Q9Y2J4</id>
    </interactant>
    <interactant intactId="EBI-373337">
        <id>O76064</id>
        <label>RNF8</label>
    </interactant>
    <organismsDiffer>false</organismsDiffer>
    <experiments>3</experiments>
</comment>
<comment type="interaction">
    <interactant intactId="EBI-746752">
        <id>Q9Y2J4</id>
    </interactant>
    <interactant intactId="EBI-2130111">
        <id>Q8TEC5</id>
        <label>SH3RF2</label>
    </interactant>
    <organismsDiffer>false</organismsDiffer>
    <experiments>4</experiments>
</comment>
<comment type="interaction">
    <interactant intactId="EBI-746752">
        <id>Q9Y2J4</id>
    </interactant>
    <interactant intactId="EBI-455078">
        <id>Q969G3</id>
        <label>SMARCE1</label>
    </interactant>
    <organismsDiffer>false</organismsDiffer>
    <experiments>3</experiments>
</comment>
<comment type="interaction">
    <interactant intactId="EBI-746752">
        <id>Q9Y2J4</id>
    </interactant>
    <interactant intactId="EBI-710310">
        <id>Q15560</id>
        <label>TCEA2</label>
    </interactant>
    <organismsDiffer>false</organismsDiffer>
    <experiments>3</experiments>
</comment>
<comment type="interaction">
    <interactant intactId="EBI-746752">
        <id>Q9Y2J4</id>
    </interactant>
    <interactant intactId="EBI-286285">
        <id>P10827</id>
        <label>THRA</label>
    </interactant>
    <organismsDiffer>false</organismsDiffer>
    <experiments>3</experiments>
</comment>
<comment type="interaction">
    <interactant intactId="EBI-746752">
        <id>Q9Y2J4</id>
    </interactant>
    <interactant intactId="EBI-10241197">
        <id>Q3SY00</id>
        <label>TSGA10IP</label>
    </interactant>
    <organismsDiffer>false</organismsDiffer>
    <experiments>3</experiments>
</comment>
<comment type="interaction">
    <interactant intactId="EBI-746752">
        <id>Q9Y2J4</id>
    </interactant>
    <interactant intactId="EBI-515331">
        <id>P07947</id>
        <label>YES1</label>
    </interactant>
    <organismsDiffer>false</organismsDiffer>
    <experiments>3</experiments>
</comment>
<comment type="interaction">
    <interactant intactId="EBI-746752">
        <id>Q9Y2J4</id>
    </interactant>
    <interactant intactId="EBI-711925">
        <id>Q05516</id>
        <label>ZBTB16</label>
    </interactant>
    <organismsDiffer>false</organismsDiffer>
    <experiments>3</experiments>
</comment>
<comment type="interaction">
    <interactant intactId="EBI-746752">
        <id>Q9Y2J4</id>
    </interactant>
    <interactant intactId="EBI-16428984">
        <id>A0A0S2Z6H0</id>
        <label>ZGPAT</label>
    </interactant>
    <organismsDiffer>false</organismsDiffer>
    <experiments>3</experiments>
</comment>
<comment type="interaction">
    <interactant intactId="EBI-746752">
        <id>Q9Y2J4</id>
    </interactant>
    <interactant intactId="EBI-10183064">
        <id>Q8N5A5-2</id>
        <label>ZGPAT</label>
    </interactant>
    <organismsDiffer>false</organismsDiffer>
    <experiments>3</experiments>
</comment>
<comment type="interaction">
    <interactant intactId="EBI-10187270">
        <id>Q9Y2J4-4</id>
    </interactant>
    <interactant intactId="EBI-2548012">
        <id>Q9H2G9</id>
        <label>BLZF1</label>
    </interactant>
    <organismsDiffer>false</organismsDiffer>
    <experiments>3</experiments>
</comment>
<comment type="interaction">
    <interactant intactId="EBI-10187270">
        <id>Q9Y2J4-4</id>
    </interactant>
    <interactant intactId="EBI-5666615">
        <id>Q5PSV4</id>
        <label>BRMS1L</label>
    </interactant>
    <organismsDiffer>false</organismsDiffer>
    <experiments>3</experiments>
</comment>
<comment type="interaction">
    <interactant intactId="EBI-10187270">
        <id>Q9Y2J4-4</id>
    </interactant>
    <interactant intactId="EBI-751319">
        <id>Q9H257</id>
        <label>CARD9</label>
    </interactant>
    <organismsDiffer>false</organismsDiffer>
    <experiments>5</experiments>
</comment>
<comment type="interaction">
    <interactant intactId="EBI-10187270">
        <id>Q9Y2J4-4</id>
    </interactant>
    <interactant intactId="EBI-10175300">
        <id>Q8TD31-3</id>
        <label>CCHCR1</label>
    </interactant>
    <organismsDiffer>false</organismsDiffer>
    <experiments>3</experiments>
</comment>
<comment type="interaction">
    <interactant intactId="EBI-10187270">
        <id>Q9Y2J4-4</id>
    </interactant>
    <interactant intactId="EBI-1181367">
        <id>Q01850</id>
        <label>CDR2</label>
    </interactant>
    <organismsDiffer>false</organismsDiffer>
    <experiments>3</experiments>
</comment>
<comment type="interaction">
    <interactant intactId="EBI-10187270">
        <id>Q9Y2J4-4</id>
    </interactant>
    <interactant intactId="EBI-10277443">
        <id>Q8WWE8</id>
        <label>CYTH4</label>
    </interactant>
    <organismsDiffer>false</organismsDiffer>
    <experiments>3</experiments>
</comment>
<comment type="interaction">
    <interactant intactId="EBI-10187270">
        <id>Q9Y2J4-4</id>
    </interactant>
    <interactant intactId="EBI-10173632">
        <id>P35638-2</id>
        <label>DDIT3</label>
    </interactant>
    <organismsDiffer>false</organismsDiffer>
    <experiments>3</experiments>
</comment>
<comment type="interaction">
    <interactant intactId="EBI-10187270">
        <id>Q9Y2J4-4</id>
    </interactant>
    <interactant intactId="EBI-349105">
        <id>P63167</id>
        <label>DYNLL1</label>
    </interactant>
    <organismsDiffer>false</organismsDiffer>
    <experiments>3</experiments>
</comment>
<comment type="interaction">
    <interactant intactId="EBI-10187270">
        <id>Q9Y2J4-4</id>
    </interactant>
    <interactant intactId="EBI-398610">
        <id>O60573</id>
        <label>EIF4E2</label>
    </interactant>
    <organismsDiffer>false</organismsDiffer>
    <experiments>3</experiments>
</comment>
<comment type="interaction">
    <interactant intactId="EBI-10187270">
        <id>Q9Y2J4-4</id>
    </interactant>
    <interactant intactId="EBI-10253239">
        <id>Q6P9G8</id>
        <label>FAM184A</label>
    </interactant>
    <organismsDiffer>false</organismsDiffer>
    <experiments>3</experiments>
</comment>
<comment type="interaction">
    <interactant intactId="EBI-10187270">
        <id>Q9Y2J4-4</id>
    </interactant>
    <interactant intactId="EBI-10220734">
        <id>P63218</id>
        <label>GNG5</label>
    </interactant>
    <organismsDiffer>false</organismsDiffer>
    <experiments>3</experiments>
</comment>
<comment type="interaction">
    <interactant intactId="EBI-10187270">
        <id>Q9Y2J4-4</id>
    </interactant>
    <interactant intactId="EBI-618309">
        <id>Q08379</id>
        <label>GOLGA2</label>
    </interactant>
    <organismsDiffer>false</organismsDiffer>
    <experiments>3</experiments>
</comment>
<comment type="interaction">
    <interactant intactId="EBI-10187270">
        <id>Q9Y2J4-4</id>
    </interactant>
    <interactant intactId="EBI-4312072">
        <id>P46439</id>
        <label>GSTM5</label>
    </interactant>
    <organismsDiffer>false</organismsDiffer>
    <experiments>3</experiments>
</comment>
<comment type="interaction">
    <interactant intactId="EBI-10187270">
        <id>Q9Y2J4-4</id>
    </interactant>
    <interactant intactId="EBI-10171552">
        <id>A1A4E9</id>
        <label>KRT13</label>
    </interactant>
    <organismsDiffer>false</organismsDiffer>
    <experiments>3</experiments>
</comment>
<comment type="interaction">
    <interactant intactId="EBI-10187270">
        <id>Q9Y2J4-4</id>
    </interactant>
    <interactant intactId="EBI-739566">
        <id>P19012</id>
        <label>KRT15</label>
    </interactant>
    <organismsDiffer>false</organismsDiffer>
    <experiments>3</experiments>
</comment>
<comment type="interaction">
    <interactant intactId="EBI-10187270">
        <id>Q9Y2J4-4</id>
    </interactant>
    <interactant intactId="EBI-742756">
        <id>P08727</id>
        <label>KRT19</label>
    </interactant>
    <organismsDiffer>false</organismsDiffer>
    <experiments>3</experiments>
</comment>
<comment type="interaction">
    <interactant intactId="EBI-10187270">
        <id>Q9Y2J4-4</id>
    </interactant>
    <interactant intactId="EBI-742094">
        <id>P35900</id>
        <label>KRT20</label>
    </interactant>
    <organismsDiffer>false</organismsDiffer>
    <experiments>3</experiments>
</comment>
<comment type="interaction">
    <interactant intactId="EBI-10187270">
        <id>Q9Y2J4-4</id>
    </interactant>
    <interactant intactId="EBI-948001">
        <id>Q15323</id>
        <label>KRT31</label>
    </interactant>
    <organismsDiffer>false</organismsDiffer>
    <experiments>3</experiments>
</comment>
<comment type="interaction">
    <interactant intactId="EBI-10187270">
        <id>Q9Y2J4-4</id>
    </interactant>
    <interactant intactId="EBI-1047263">
        <id>O76015</id>
        <label>KRT38</label>
    </interactant>
    <organismsDiffer>false</organismsDiffer>
    <experiments>3</experiments>
</comment>
<comment type="interaction">
    <interactant intactId="EBI-10187270">
        <id>Q9Y2J4-4</id>
    </interactant>
    <interactant intactId="EBI-10172150">
        <id>P60370</id>
        <label>KRTAP10-5</label>
    </interactant>
    <organismsDiffer>false</organismsDiffer>
    <experiments>3</experiments>
</comment>
<comment type="interaction">
    <interactant intactId="EBI-10187270">
        <id>Q9Y2J4-4</id>
    </interactant>
    <interactant intactId="EBI-10172511">
        <id>Q9BYR5</id>
        <label>KRTAP4-2</label>
    </interactant>
    <organismsDiffer>false</organismsDiffer>
    <experiments>3</experiments>
</comment>
<comment type="interaction">
    <interactant intactId="EBI-10187270">
        <id>Q9Y2J4-4</id>
    </interactant>
    <interactant intactId="EBI-2798728">
        <id>P61968</id>
        <label>LMO4</label>
    </interactant>
    <organismsDiffer>false</organismsDiffer>
    <experiments>3</experiments>
</comment>
<comment type="interaction">
    <interactant intactId="EBI-10187270">
        <id>Q9Y2J4-4</id>
    </interactant>
    <interactant intactId="EBI-10194128">
        <id>Q1RN33</id>
        <label>MAGEA4</label>
    </interactant>
    <organismsDiffer>false</organismsDiffer>
    <experiments>3</experiments>
</comment>
<comment type="interaction">
    <interactant intactId="EBI-10187270">
        <id>Q9Y2J4-4</id>
    </interactant>
    <interactant intactId="EBI-1048159">
        <id>P55081</id>
        <label>MFAP1</label>
    </interactant>
    <organismsDiffer>false</organismsDiffer>
    <experiments>3</experiments>
</comment>
<comment type="interaction">
    <interactant intactId="EBI-10187270">
        <id>Q9Y2J4-4</id>
    </interactant>
    <interactant intactId="EBI-766064">
        <id>Q9Y217</id>
        <label>MTMR6</label>
    </interactant>
    <organismsDiffer>false</organismsDiffer>
    <experiments>3</experiments>
</comment>
<comment type="interaction">
    <interactant intactId="EBI-10187270">
        <id>Q9Y2J4-4</id>
    </interactant>
    <interactant intactId="EBI-311356">
        <id>Q9ULV0</id>
        <label>MYO5B</label>
    </interactant>
    <organismsDiffer>false</organismsDiffer>
    <experiments>3</experiments>
</comment>
<comment type="interaction">
    <interactant intactId="EBI-10187270">
        <id>Q9Y2J4-4</id>
    </interactant>
    <interactant intactId="EBI-3951858">
        <id>Q16649</id>
        <label>NFIL3</label>
    </interactant>
    <organismsDiffer>false</organismsDiffer>
    <experiments>3</experiments>
</comment>
<comment type="interaction">
    <interactant intactId="EBI-10187270">
        <id>Q9Y2J4-4</id>
    </interactant>
    <interactant intactId="EBI-741158">
        <id>Q96HA8</id>
        <label>NTAQ1</label>
    </interactant>
    <organismsDiffer>false</organismsDiffer>
    <experiments>3</experiments>
</comment>
<comment type="interaction">
    <interactant intactId="EBI-10187270">
        <id>Q9Y2J4-4</id>
    </interactant>
    <interactant intactId="EBI-359720">
        <id>P17980</id>
        <label>PSMC3</label>
    </interactant>
    <organismsDiffer>false</organismsDiffer>
    <experiments>5</experiments>
</comment>
<comment type="interaction">
    <interactant intactId="EBI-10187270">
        <id>Q9Y2J4-4</id>
    </interactant>
    <interactant intactId="EBI-1055693">
        <id>O75771</id>
        <label>RAD51D</label>
    </interactant>
    <organismsDiffer>false</organismsDiffer>
    <experiments>3</experiments>
</comment>
<comment type="interaction">
    <interactant intactId="EBI-10187270">
        <id>Q9Y2J4-4</id>
    </interactant>
    <interactant intactId="EBI-749285">
        <id>Q15311</id>
        <label>RALBP1</label>
    </interactant>
    <organismsDiffer>false</organismsDiffer>
    <experiments>3</experiments>
</comment>
<comment type="interaction">
    <interactant intactId="EBI-10187270">
        <id>Q9Y2J4-4</id>
    </interactant>
    <interactant intactId="EBI-367390">
        <id>Q8WWW0</id>
        <label>RASSF5</label>
    </interactant>
    <organismsDiffer>false</organismsDiffer>
    <experiments>3</experiments>
</comment>
<comment type="interaction">
    <interactant intactId="EBI-10187270">
        <id>Q9Y2J4-4</id>
    </interactant>
    <interactant intactId="EBI-2372238">
        <id>Q5VTR2</id>
        <label>RNF20</label>
    </interactant>
    <organismsDiffer>false</organismsDiffer>
    <experiments>3</experiments>
</comment>
<comment type="interaction">
    <interactant intactId="EBI-10187270">
        <id>Q9Y2J4-4</id>
    </interactant>
    <interactant intactId="EBI-744408">
        <id>O75150</id>
        <label>RNF40</label>
    </interactant>
    <organismsDiffer>false</organismsDiffer>
    <experiments>3</experiments>
</comment>
<comment type="interaction">
    <interactant intactId="EBI-10187270">
        <id>Q9Y2J4-4</id>
    </interactant>
    <interactant intactId="EBI-10225873">
        <id>Q08AM8</id>
        <label>SH3RF2</label>
    </interactant>
    <organismsDiffer>false</organismsDiffer>
    <experiments>3</experiments>
</comment>
<comment type="interaction">
    <interactant intactId="EBI-10187270">
        <id>Q9Y2J4-4</id>
    </interactant>
    <interactant intactId="EBI-455078">
        <id>Q969G3</id>
        <label>SMARCE1</label>
    </interactant>
    <organismsDiffer>false</organismsDiffer>
    <experiments>3</experiments>
</comment>
<comment type="interaction">
    <interactant intactId="EBI-10187270">
        <id>Q9Y2J4-4</id>
    </interactant>
    <interactant intactId="EBI-751145">
        <id>P23497</id>
        <label>SP100</label>
    </interactant>
    <organismsDiffer>false</organismsDiffer>
    <experiments>3</experiments>
</comment>
<comment type="interaction">
    <interactant intactId="EBI-10187270">
        <id>Q9Y2J4-4</id>
    </interactant>
    <interactant intactId="EBI-413317">
        <id>Q96R06</id>
        <label>SPAG5</label>
    </interactant>
    <organismsDiffer>false</organismsDiffer>
    <experiments>3</experiments>
</comment>
<comment type="interaction">
    <interactant intactId="EBI-10187270">
        <id>Q9Y2J4-4</id>
    </interactant>
    <interactant intactId="EBI-286285">
        <id>P10827</id>
        <label>THRA</label>
    </interactant>
    <organismsDiffer>false</organismsDiffer>
    <experiments>3</experiments>
</comment>
<comment type="interaction">
    <interactant intactId="EBI-10187270">
        <id>Q9Y2J4-4</id>
    </interactant>
    <interactant intactId="EBI-355744">
        <id>Q12933</id>
        <label>TRAF2</label>
    </interactant>
    <organismsDiffer>false</organismsDiffer>
    <experiments>3</experiments>
</comment>
<comment type="interaction">
    <interactant intactId="EBI-10187270">
        <id>Q9Y2J4-4</id>
    </interactant>
    <interactant intactId="EBI-719493">
        <id>P14373</id>
        <label>TRIM27</label>
    </interactant>
    <organismsDiffer>false</organismsDiffer>
    <experiments>3</experiments>
</comment>
<comment type="interaction">
    <interactant intactId="EBI-10187270">
        <id>Q9Y2J4-4</id>
    </interactant>
    <interactant intactId="EBI-740037">
        <id>O96006</id>
        <label>ZBED1</label>
    </interactant>
    <organismsDiffer>false</organismsDiffer>
    <experiments>3</experiments>
</comment>
<comment type="interaction">
    <interactant intactId="EBI-10187270">
        <id>Q9Y2J4-4</id>
    </interactant>
    <interactant intactId="EBI-3439227">
        <id>Q8N5A5</id>
        <label>ZGPAT</label>
    </interactant>
    <organismsDiffer>false</organismsDiffer>
    <experiments>3</experiments>
</comment>
<comment type="interaction">
    <interactant intactId="EBI-10187270">
        <id>Q9Y2J4-4</id>
    </interactant>
    <interactant intactId="EBI-10183064">
        <id>Q8N5A5-2</id>
        <label>ZGPAT</label>
    </interactant>
    <organismsDiffer>false</organismsDiffer>
    <experiments>3</experiments>
</comment>
<comment type="subcellular location">
    <subcellularLocation>
        <location evidence="2">Recycling endosome</location>
    </subcellularLocation>
    <subcellularLocation>
        <location evidence="14">Cytoplasm</location>
    </subcellularLocation>
    <subcellularLocation>
        <location evidence="3">Cell projection</location>
        <location evidence="3">Podosome</location>
    </subcellularLocation>
    <subcellularLocation>
        <location evidence="16">Cell junction</location>
    </subcellularLocation>
</comment>
<comment type="alternative products">
    <event type="alternative splicing"/>
    <isoform>
        <id>Q9Y2J4-1</id>
        <name>1</name>
        <sequence type="displayed"/>
    </isoform>
    <isoform>
        <id>Q9Y2J4-2</id>
        <name>2</name>
        <sequence type="described" ref="VSP_015711"/>
    </isoform>
    <isoform>
        <id>Q9Y2J4-3</id>
        <name>3</name>
        <sequence type="described" ref="VSP_037826"/>
    </isoform>
    <isoform>
        <id>Q9Y2J4-4</id>
        <name>4</name>
        <sequence type="described" ref="VSP_044081"/>
    </isoform>
</comment>
<comment type="developmental stage">
    <text evidence="16">Expressed in the trophectoderm of the blastocyst at 5 dpc (at protein level).</text>
</comment>
<comment type="PTM">
    <text evidence="15 17">Monoubiquitinated at Lys-347 and Lys-408 by Crumbs complex-bound WWP1 (PubMed:34404733). De-ubiquitinated at Lys-347 and Lys-408 by USP9X; the interaction may be promoted by cell contact inhibition (PubMed:26598551, PubMed:34404733). Deubiquitination of AMOTL2 negatively regulates Hippo signaling activation (PubMed:26598551).</text>
</comment>
<comment type="PTM">
    <text evidence="2">Phosphorylation at Tyr-107 is necessary for efficient binding to SRC and synergistically functioning with SRC to activate the downstream MAPK pathway.</text>
</comment>
<comment type="similarity">
    <text evidence="22">Belongs to the angiomotin family.</text>
</comment>
<comment type="sequence caution" evidence="22">
    <conflict type="erroneous initiation">
        <sequence resource="EMBL-CDS" id="AAH11454"/>
    </conflict>
    <text>Truncated N-terminus.</text>
</comment>
<comment type="sequence caution" evidence="22">
    <conflict type="erroneous initiation">
        <sequence resource="EMBL-CDS" id="BAA76833"/>
    </conflict>
    <text>Extended N-terminus.</text>
</comment>
<comment type="sequence caution" evidence="22">
    <conflict type="erroneous initiation">
        <sequence resource="EMBL-CDS" id="BAD97318"/>
    </conflict>
    <text>Extended N-terminus.</text>
</comment>
<dbReference type="EMBL" id="AB023206">
    <property type="protein sequence ID" value="BAA76833.1"/>
    <property type="status" value="ALT_INIT"/>
    <property type="molecule type" value="mRNA"/>
</dbReference>
<dbReference type="EMBL" id="AK291616">
    <property type="protein sequence ID" value="BAF84305.1"/>
    <property type="molecule type" value="mRNA"/>
</dbReference>
<dbReference type="EMBL" id="AK299270">
    <property type="protein sequence ID" value="BAH12987.1"/>
    <property type="molecule type" value="mRNA"/>
</dbReference>
<dbReference type="EMBL" id="AK223598">
    <property type="protein sequence ID" value="BAD97318.1"/>
    <property type="status" value="ALT_INIT"/>
    <property type="molecule type" value="mRNA"/>
</dbReference>
<dbReference type="EMBL" id="AF175966">
    <property type="protein sequence ID" value="AAD56361.2"/>
    <property type="molecule type" value="mRNA"/>
</dbReference>
<dbReference type="EMBL" id="AC010207">
    <property type="status" value="NOT_ANNOTATED_CDS"/>
    <property type="molecule type" value="Genomic_DNA"/>
</dbReference>
<dbReference type="EMBL" id="BC011454">
    <property type="protein sequence ID" value="AAH11454.1"/>
    <property type="status" value="ALT_INIT"/>
    <property type="molecule type" value="mRNA"/>
</dbReference>
<dbReference type="CCDS" id="CCDS33860.1">
    <molecule id="Q9Y2J4-2"/>
</dbReference>
<dbReference type="CCDS" id="CCDS63783.1">
    <molecule id="Q9Y2J4-3"/>
</dbReference>
<dbReference type="CCDS" id="CCDS63784.1">
    <molecule id="Q9Y2J4-4"/>
</dbReference>
<dbReference type="CCDS" id="CCDS87138.1">
    <molecule id="Q9Y2J4-1"/>
</dbReference>
<dbReference type="RefSeq" id="NP_001265612.1">
    <molecule id="Q9Y2J4-4"/>
    <property type="nucleotide sequence ID" value="NM_001278683.1"/>
</dbReference>
<dbReference type="RefSeq" id="NP_001265614.1">
    <molecule id="Q9Y2J4-3"/>
    <property type="nucleotide sequence ID" value="NM_001278685.2"/>
</dbReference>
<dbReference type="RefSeq" id="NP_001350872.1">
    <molecule id="Q9Y2J4-1"/>
    <property type="nucleotide sequence ID" value="NM_001363943.2"/>
</dbReference>
<dbReference type="RefSeq" id="NP_057285.3">
    <molecule id="Q9Y2J4-2"/>
    <property type="nucleotide sequence ID" value="NM_016201.3"/>
</dbReference>
<dbReference type="RefSeq" id="XP_006713717.1">
    <property type="nucleotide sequence ID" value="XM_006713654.2"/>
</dbReference>
<dbReference type="RefSeq" id="XP_011511183.1">
    <property type="nucleotide sequence ID" value="XM_011512881.1"/>
</dbReference>
<dbReference type="RefSeq" id="XP_016862069.1">
    <property type="nucleotide sequence ID" value="XM_017006580.1"/>
</dbReference>
<dbReference type="RefSeq" id="XP_016862070.1">
    <property type="nucleotide sequence ID" value="XM_017006581.1"/>
</dbReference>
<dbReference type="RefSeq" id="XP_016862071.1">
    <property type="nucleotide sequence ID" value="XM_017006582.1"/>
</dbReference>
<dbReference type="SMR" id="Q9Y2J4"/>
<dbReference type="BioGRID" id="119530">
    <property type="interactions" value="163"/>
</dbReference>
<dbReference type="CORUM" id="Q9Y2J4"/>
<dbReference type="DIP" id="DIP-57510N"/>
<dbReference type="FunCoup" id="Q9Y2J4">
    <property type="interactions" value="739"/>
</dbReference>
<dbReference type="IntAct" id="Q9Y2J4">
    <property type="interactions" value="131"/>
</dbReference>
<dbReference type="MINT" id="Q9Y2J4"/>
<dbReference type="STRING" id="9606.ENSP00000424765"/>
<dbReference type="GlyCosmos" id="Q9Y2J4">
    <property type="glycosylation" value="1 site, 1 glycan"/>
</dbReference>
<dbReference type="GlyGen" id="Q9Y2J4">
    <property type="glycosylation" value="2 sites, 1 N-linked glycan (1 site), 1 O-linked glycan (1 site)"/>
</dbReference>
<dbReference type="iPTMnet" id="Q9Y2J4"/>
<dbReference type="PhosphoSitePlus" id="Q9Y2J4"/>
<dbReference type="BioMuta" id="AMOTL2"/>
<dbReference type="DMDM" id="308153633"/>
<dbReference type="jPOST" id="Q9Y2J4"/>
<dbReference type="MassIVE" id="Q9Y2J4"/>
<dbReference type="PaxDb" id="9606-ENSP00000424765"/>
<dbReference type="PeptideAtlas" id="Q9Y2J4"/>
<dbReference type="ProteomicsDB" id="20614"/>
<dbReference type="ProteomicsDB" id="85814">
    <molecule id="Q9Y2J4-1"/>
</dbReference>
<dbReference type="ProteomicsDB" id="85815">
    <molecule id="Q9Y2J4-2"/>
</dbReference>
<dbReference type="ProteomicsDB" id="85816">
    <molecule id="Q9Y2J4-3"/>
</dbReference>
<dbReference type="Pumba" id="Q9Y2J4"/>
<dbReference type="Antibodypedia" id="33394">
    <property type="antibodies" value="107 antibodies from 23 providers"/>
</dbReference>
<dbReference type="DNASU" id="51421"/>
<dbReference type="Ensembl" id="ENST00000249883.10">
    <molecule id="Q9Y2J4-2"/>
    <property type="protein sequence ID" value="ENSP00000249883.5"/>
    <property type="gene ID" value="ENSG00000114019.15"/>
</dbReference>
<dbReference type="Ensembl" id="ENST00000422605.6">
    <molecule id="Q9Y2J4-1"/>
    <property type="protein sequence ID" value="ENSP00000409999.2"/>
    <property type="gene ID" value="ENSG00000114019.15"/>
</dbReference>
<dbReference type="Ensembl" id="ENST00000513145.1">
    <molecule id="Q9Y2J4-3"/>
    <property type="protein sequence ID" value="ENSP00000425475.1"/>
    <property type="gene ID" value="ENSG00000114019.15"/>
</dbReference>
<dbReference type="Ensembl" id="ENST00000514516.5">
    <molecule id="Q9Y2J4-4"/>
    <property type="protein sequence ID" value="ENSP00000424765.1"/>
    <property type="gene ID" value="ENSG00000114019.15"/>
</dbReference>
<dbReference type="GeneID" id="51421"/>
<dbReference type="KEGG" id="hsa:51421"/>
<dbReference type="MANE-Select" id="ENST00000249883.10">
    <molecule id="Q9Y2J4-2"/>
    <property type="protein sequence ID" value="ENSP00000249883.5"/>
    <property type="RefSeq nucleotide sequence ID" value="NM_016201.4"/>
    <property type="RefSeq protein sequence ID" value="NP_057285.3"/>
</dbReference>
<dbReference type="UCSC" id="uc003eqf.4">
    <molecule id="Q9Y2J4-1"/>
    <property type="organism name" value="human"/>
</dbReference>
<dbReference type="AGR" id="HGNC:17812"/>
<dbReference type="CTD" id="51421"/>
<dbReference type="DisGeNET" id="51421"/>
<dbReference type="GeneCards" id="AMOTL2"/>
<dbReference type="HGNC" id="HGNC:17812">
    <property type="gene designation" value="AMOTL2"/>
</dbReference>
<dbReference type="HPA" id="ENSG00000114019">
    <property type="expression patterns" value="Low tissue specificity"/>
</dbReference>
<dbReference type="MIM" id="614658">
    <property type="type" value="gene"/>
</dbReference>
<dbReference type="neXtProt" id="NX_Q9Y2J4"/>
<dbReference type="OpenTargets" id="ENSG00000114019"/>
<dbReference type="PharmGKB" id="PA24775"/>
<dbReference type="VEuPathDB" id="HostDB:ENSG00000114019"/>
<dbReference type="eggNOG" id="ENOG502QR7W">
    <property type="taxonomic scope" value="Eukaryota"/>
</dbReference>
<dbReference type="GeneTree" id="ENSGT00940000156577"/>
<dbReference type="HOGENOM" id="CLU_009937_2_0_1"/>
<dbReference type="InParanoid" id="Q9Y2J4"/>
<dbReference type="OMA" id="HGDHFYL"/>
<dbReference type="OrthoDB" id="5974715at2759"/>
<dbReference type="PAN-GO" id="Q9Y2J4">
    <property type="GO annotations" value="8 GO annotations based on evolutionary models"/>
</dbReference>
<dbReference type="PhylomeDB" id="Q9Y2J4"/>
<dbReference type="TreeFam" id="TF333368"/>
<dbReference type="PathwayCommons" id="Q9Y2J4"/>
<dbReference type="Reactome" id="R-HSA-2028269">
    <property type="pathway name" value="Signaling by Hippo"/>
</dbReference>
<dbReference type="SignaLink" id="Q9Y2J4"/>
<dbReference type="SIGNOR" id="Q9Y2J4"/>
<dbReference type="BioGRID-ORCS" id="51421">
    <property type="hits" value="31 hits in 1161 CRISPR screens"/>
</dbReference>
<dbReference type="ChiTaRS" id="AMOTL2">
    <property type="organism name" value="human"/>
</dbReference>
<dbReference type="GeneWiki" id="AMOTL2"/>
<dbReference type="GenomeRNAi" id="51421"/>
<dbReference type="Pharos" id="Q9Y2J4">
    <property type="development level" value="Tbio"/>
</dbReference>
<dbReference type="PRO" id="PR:Q9Y2J4"/>
<dbReference type="Proteomes" id="UP000005640">
    <property type="component" value="Chromosome 3"/>
</dbReference>
<dbReference type="RNAct" id="Q9Y2J4">
    <property type="molecule type" value="protein"/>
</dbReference>
<dbReference type="Bgee" id="ENSG00000114019">
    <property type="expression patterns" value="Expressed in amniotic fluid and 204 other cell types or tissues"/>
</dbReference>
<dbReference type="ExpressionAtlas" id="Q9Y2J4">
    <property type="expression patterns" value="baseline and differential"/>
</dbReference>
<dbReference type="GO" id="GO:0005923">
    <property type="term" value="C:bicellular tight junction"/>
    <property type="evidence" value="ECO:0000318"/>
    <property type="project" value="GO_Central"/>
</dbReference>
<dbReference type="GO" id="GO:0030054">
    <property type="term" value="C:cell junction"/>
    <property type="evidence" value="ECO:0000250"/>
    <property type="project" value="UniProtKB"/>
</dbReference>
<dbReference type="GO" id="GO:0042995">
    <property type="term" value="C:cell projection"/>
    <property type="evidence" value="ECO:0007669"/>
    <property type="project" value="UniProtKB-KW"/>
</dbReference>
<dbReference type="GO" id="GO:0005737">
    <property type="term" value="C:cytoplasm"/>
    <property type="evidence" value="ECO:0000314"/>
    <property type="project" value="UniProtKB"/>
</dbReference>
<dbReference type="GO" id="GO:0031410">
    <property type="term" value="C:cytoplasmic vesicle"/>
    <property type="evidence" value="ECO:0000318"/>
    <property type="project" value="GO_Central"/>
</dbReference>
<dbReference type="GO" id="GO:0005829">
    <property type="term" value="C:cytosol"/>
    <property type="evidence" value="ECO:0000304"/>
    <property type="project" value="Reactome"/>
</dbReference>
<dbReference type="GO" id="GO:0005886">
    <property type="term" value="C:plasma membrane"/>
    <property type="evidence" value="ECO:0000318"/>
    <property type="project" value="GO_Central"/>
</dbReference>
<dbReference type="GO" id="GO:0002102">
    <property type="term" value="C:podosome"/>
    <property type="evidence" value="ECO:0000314"/>
    <property type="project" value="UniProtKB"/>
</dbReference>
<dbReference type="GO" id="GO:0055037">
    <property type="term" value="C:recycling endosome"/>
    <property type="evidence" value="ECO:0007669"/>
    <property type="project" value="UniProtKB-SubCell"/>
</dbReference>
<dbReference type="GO" id="GO:0051015">
    <property type="term" value="F:actin filament binding"/>
    <property type="evidence" value="ECO:0000250"/>
    <property type="project" value="UniProtKB"/>
</dbReference>
<dbReference type="GO" id="GO:0030036">
    <property type="term" value="P:actin cytoskeleton organization"/>
    <property type="evidence" value="ECO:0000318"/>
    <property type="project" value="GO_Central"/>
</dbReference>
<dbReference type="GO" id="GO:0001525">
    <property type="term" value="P:angiogenesis"/>
    <property type="evidence" value="ECO:0000318"/>
    <property type="project" value="GO_Central"/>
</dbReference>
<dbReference type="GO" id="GO:0001886">
    <property type="term" value="P:endothelial cell morphogenesis"/>
    <property type="evidence" value="ECO:0000250"/>
    <property type="project" value="UniProtKB"/>
</dbReference>
<dbReference type="GO" id="GO:0003365">
    <property type="term" value="P:establishment of cell polarity involved in ameboidal cell migration"/>
    <property type="evidence" value="ECO:0000318"/>
    <property type="project" value="GO_Central"/>
</dbReference>
<dbReference type="GO" id="GO:0035329">
    <property type="term" value="P:hippo signaling"/>
    <property type="evidence" value="ECO:0000318"/>
    <property type="project" value="GO_Central"/>
</dbReference>
<dbReference type="GO" id="GO:0000122">
    <property type="term" value="P:negative regulation of transcription by RNA polymerase II"/>
    <property type="evidence" value="ECO:0000250"/>
    <property type="project" value="UniProtKB"/>
</dbReference>
<dbReference type="GO" id="GO:1903829">
    <property type="term" value="P:positive regulation of protein localization"/>
    <property type="evidence" value="ECO:0000314"/>
    <property type="project" value="UniProtKB"/>
</dbReference>
<dbReference type="GO" id="GO:0030334">
    <property type="term" value="P:regulation of cell migration"/>
    <property type="evidence" value="ECO:0000318"/>
    <property type="project" value="GO_Central"/>
</dbReference>
<dbReference type="GO" id="GO:0016055">
    <property type="term" value="P:Wnt signaling pathway"/>
    <property type="evidence" value="ECO:0007669"/>
    <property type="project" value="UniProtKB-KW"/>
</dbReference>
<dbReference type="InterPro" id="IPR009114">
    <property type="entry name" value="Angiomotin"/>
</dbReference>
<dbReference type="InterPro" id="IPR051747">
    <property type="entry name" value="Angiomotin-like"/>
</dbReference>
<dbReference type="InterPro" id="IPR024646">
    <property type="entry name" value="Angiomotin_C"/>
</dbReference>
<dbReference type="PANTHER" id="PTHR14826">
    <property type="entry name" value="ANGIOMOTIN"/>
    <property type="match status" value="1"/>
</dbReference>
<dbReference type="PANTHER" id="PTHR14826:SF3">
    <property type="entry name" value="ANGIOMOTIN-LIKE PROTEIN 2"/>
    <property type="match status" value="1"/>
</dbReference>
<dbReference type="Pfam" id="PF12240">
    <property type="entry name" value="Angiomotin_C"/>
    <property type="match status" value="1"/>
</dbReference>
<dbReference type="PRINTS" id="PR01807">
    <property type="entry name" value="ANGIOMOTIN"/>
</dbReference>